<accession>Q2PP75</accession>
<accession>A9YWS3</accession>
<proteinExistence type="evidence at transcript level"/>
<gene>
    <name evidence="4" type="primary">LEC8</name>
    <name evidence="7" type="ordered locus">MTR_5g031090</name>
    <name evidence="8" type="ORF">MtrunA17_Chr5g0411731</name>
</gene>
<protein>
    <recommendedName>
        <fullName evidence="4">Lectin 8</fullName>
        <shortName evidence="4">MtLec8</shortName>
    </recommendedName>
    <alternativeName>
        <fullName evidence="5">Agglutinin LEC8</fullName>
    </alternativeName>
</protein>
<comment type="function">
    <text evidence="6">May be involved in arbuscular mycorrhizal (AM) symbiosis with AM fungi.</text>
</comment>
<comment type="induction">
    <text evidence="3">Accumulates in roots during colonization by arbuscular mycorrhizal (AM) fungi (e.g. Glomus intraradices).</text>
</comment>
<comment type="similarity">
    <text evidence="5">Belongs to the leguminous lectin family.</text>
</comment>
<feature type="signal peptide" evidence="1">
    <location>
        <begin position="1"/>
        <end position="31"/>
    </location>
</feature>
<feature type="chain" id="PRO_5022658042" description="Lectin 8">
    <location>
        <begin position="32"/>
        <end position="275"/>
    </location>
</feature>
<feature type="glycosylation site" description="N-linked (GlcNAc...) asparagine" evidence="2">
    <location>
        <position position="55"/>
    </location>
</feature>
<feature type="glycosylation site" description="N-linked (GlcNAc...) asparagine" evidence="2">
    <location>
        <position position="150"/>
    </location>
</feature>
<feature type="sequence conflict" description="In Ref. 3; ABY48145 and 5; AES95924." evidence="5" ref="3 5">
    <original>K</original>
    <variation>E</variation>
    <location>
        <position position="95"/>
    </location>
</feature>
<keyword id="KW-0325">Glycoprotein</keyword>
<keyword id="KW-0430">Lectin</keyword>
<keyword id="KW-1185">Reference proteome</keyword>
<keyword id="KW-0732">Signal</keyword>
<name>LEC8_MEDTR</name>
<sequence length="275" mass="29915">MANSNPKLLVTQNPFSVFLLTFLLLITNVKSDSFSFNFPKFDTDTKSIIIDGDANTTNGVLQLTKKDQLGNPSPHSFGLSFFLGAIHLSDKQSGKVADFTTEFSFVVNPKGSQLHGDGFTFFIASLDYEFPEKSSDGGFLGLFDKESAFNTSQNSIVAVEFDSFRNEWDPQIAGNSPHIGIDINTIRSSATALWPIDRVPEGSIGKAHISYNPASKKLTALVTYLNGPVIEETAVSYTVDFAAILPEYVLVGFSGATGELAETHDILSWSFTSNL</sequence>
<organism>
    <name type="scientific">Medicago truncatula</name>
    <name type="common">Barrel medic</name>
    <name type="synonym">Medicago tribuloides</name>
    <dbReference type="NCBI Taxonomy" id="3880"/>
    <lineage>
        <taxon>Eukaryota</taxon>
        <taxon>Viridiplantae</taxon>
        <taxon>Streptophyta</taxon>
        <taxon>Embryophyta</taxon>
        <taxon>Tracheophyta</taxon>
        <taxon>Spermatophyta</taxon>
        <taxon>Magnoliopsida</taxon>
        <taxon>eudicotyledons</taxon>
        <taxon>Gunneridae</taxon>
        <taxon>Pentapetalae</taxon>
        <taxon>rosids</taxon>
        <taxon>fabids</taxon>
        <taxon>Fabales</taxon>
        <taxon>Fabaceae</taxon>
        <taxon>Papilionoideae</taxon>
        <taxon>50 kb inversion clade</taxon>
        <taxon>NPAAA clade</taxon>
        <taxon>Hologalegina</taxon>
        <taxon>IRL clade</taxon>
        <taxon>Trifolieae</taxon>
        <taxon>Medicago</taxon>
    </lineage>
</organism>
<reference key="1">
    <citation type="journal article" date="2005" name="Mol. Plant Microbe Interact.">
        <title>Combined transcriptome profiling reveals a novel family of arbuscular mycorrhizal-specific Medicago truncatula lectin genes.</title>
        <authorList>
            <person name="Frenzel A."/>
            <person name="Manthey K."/>
            <person name="Perlick A.M."/>
            <person name="Meyer F."/>
            <person name="Puehler A."/>
            <person name="Kuester H."/>
            <person name="Krajinski F."/>
        </authorList>
    </citation>
    <scope>NUCLEOTIDE SEQUENCE [MRNA]</scope>
    <scope>INDUCTION BY ARBUSCULAR MYCORRHIZAL FUNGI</scope>
    <source>
        <strain>cv. Jemalong A17</strain>
    </source>
</reference>
<reference key="2">
    <citation type="journal article" date="2005" name="Mol. Genet. Genomics">
        <title>Significant microsynteny with new evolutionary highlights is detected between Arabidopsis and legume model plants despite the lack of macrosynteny.</title>
        <authorList>
            <person name="Kevei Z."/>
            <person name="Seres A."/>
            <person name="Kereszt A."/>
            <person name="Kalo P."/>
            <person name="Kiss P."/>
            <person name="Toth G."/>
            <person name="Endre G."/>
            <person name="Kiss G.B."/>
        </authorList>
    </citation>
    <scope>NUCLEOTIDE SEQUENCE [LARGE SCALE GENOMIC DNA]</scope>
    <source>
        <strain>cv. Jemalong A17</strain>
    </source>
</reference>
<reference key="3">
    <citation type="journal article" date="2011" name="Nature">
        <title>The Medicago genome provides insight into the evolution of rhizobial symbioses.</title>
        <authorList>
            <person name="Young N.D."/>
            <person name="Debelle F."/>
            <person name="Oldroyd G.E.D."/>
            <person name="Geurts R."/>
            <person name="Cannon S.B."/>
            <person name="Udvardi M.K."/>
            <person name="Benedito V.A."/>
            <person name="Mayer K.F.X."/>
            <person name="Gouzy J."/>
            <person name="Schoof H."/>
            <person name="Van de Peer Y."/>
            <person name="Proost S."/>
            <person name="Cook D.R."/>
            <person name="Meyers B.C."/>
            <person name="Spannagl M."/>
            <person name="Cheung F."/>
            <person name="De Mita S."/>
            <person name="Krishnakumar V."/>
            <person name="Gundlach H."/>
            <person name="Zhou S."/>
            <person name="Mudge J."/>
            <person name="Bharti A.K."/>
            <person name="Murray J.D."/>
            <person name="Naoumkina M.A."/>
            <person name="Rosen B."/>
            <person name="Silverstein K.A.T."/>
            <person name="Tang H."/>
            <person name="Rombauts S."/>
            <person name="Zhao P.X."/>
            <person name="Zhou P."/>
            <person name="Barbe V."/>
            <person name="Bardou P."/>
            <person name="Bechner M."/>
            <person name="Bellec A."/>
            <person name="Berger A."/>
            <person name="Berges H."/>
            <person name="Bidwell S."/>
            <person name="Bisseling T."/>
            <person name="Choisne N."/>
            <person name="Couloux A."/>
            <person name="Denny R."/>
            <person name="Deshpande S."/>
            <person name="Dai X."/>
            <person name="Doyle J.J."/>
            <person name="Dudez A.-M."/>
            <person name="Farmer A.D."/>
            <person name="Fouteau S."/>
            <person name="Franken C."/>
            <person name="Gibelin C."/>
            <person name="Gish J."/>
            <person name="Goldstein S."/>
            <person name="Gonzalez A.J."/>
            <person name="Green P.J."/>
            <person name="Hallab A."/>
            <person name="Hartog M."/>
            <person name="Hua A."/>
            <person name="Humphray S.J."/>
            <person name="Jeong D.-H."/>
            <person name="Jing Y."/>
            <person name="Jocker A."/>
            <person name="Kenton S.M."/>
            <person name="Kim D.-J."/>
            <person name="Klee K."/>
            <person name="Lai H."/>
            <person name="Lang C."/>
            <person name="Lin S."/>
            <person name="Macmil S.L."/>
            <person name="Magdelenat G."/>
            <person name="Matthews L."/>
            <person name="McCorrison J."/>
            <person name="Monaghan E.L."/>
            <person name="Mun J.-H."/>
            <person name="Najar F.Z."/>
            <person name="Nicholson C."/>
            <person name="Noirot C."/>
            <person name="O'Bleness M."/>
            <person name="Paule C.R."/>
            <person name="Poulain J."/>
            <person name="Prion F."/>
            <person name="Qin B."/>
            <person name="Qu C."/>
            <person name="Retzel E.F."/>
            <person name="Riddle C."/>
            <person name="Sallet E."/>
            <person name="Samain S."/>
            <person name="Samson N."/>
            <person name="Sanders I."/>
            <person name="Saurat O."/>
            <person name="Scarpelli C."/>
            <person name="Schiex T."/>
            <person name="Segurens B."/>
            <person name="Severin A.J."/>
            <person name="Sherrier D.J."/>
            <person name="Shi R."/>
            <person name="Sims S."/>
            <person name="Singer S.R."/>
            <person name="Sinharoy S."/>
            <person name="Sterck L."/>
            <person name="Viollet A."/>
            <person name="Wang B.-B."/>
            <person name="Wang K."/>
            <person name="Wang M."/>
            <person name="Wang X."/>
            <person name="Warfsmann J."/>
            <person name="Weissenbach J."/>
            <person name="White D.D."/>
            <person name="White J.D."/>
            <person name="Wiley G.B."/>
            <person name="Wincker P."/>
            <person name="Xing Y."/>
            <person name="Yang L."/>
            <person name="Yao Z."/>
            <person name="Ying F."/>
            <person name="Zhai J."/>
            <person name="Zhou L."/>
            <person name="Zuber A."/>
            <person name="Denarie J."/>
            <person name="Dixon R.A."/>
            <person name="May G.D."/>
            <person name="Schwartz D.C."/>
            <person name="Rogers J."/>
            <person name="Quetier F."/>
            <person name="Town C.D."/>
            <person name="Roe B.A."/>
        </authorList>
    </citation>
    <scope>NUCLEOTIDE SEQUENCE [LARGE SCALE GENOMIC DNA]</scope>
    <source>
        <strain>cv. Jemalong A17</strain>
    </source>
</reference>
<reference key="4">
    <citation type="journal article" date="2014" name="BMC Genomics">
        <title>An improved genome release (version Mt4.0) for the model legume Medicago truncatula.</title>
        <authorList>
            <person name="Tang H."/>
            <person name="Krishnakumar V."/>
            <person name="Bidwell S."/>
            <person name="Rosen B."/>
            <person name="Chan A."/>
            <person name="Zhou S."/>
            <person name="Gentzbittel L."/>
            <person name="Childs K.L."/>
            <person name="Yandell M."/>
            <person name="Gundlach H."/>
            <person name="Mayer K.F."/>
            <person name="Schwartz D.C."/>
            <person name="Town C.D."/>
        </authorList>
    </citation>
    <scope>GENOME REANNOTATION</scope>
    <source>
        <strain>cv. Jemalong A17</strain>
    </source>
</reference>
<reference key="5">
    <citation type="journal article" date="2018" name="Nat. Plants">
        <title>Whole-genome landscape of Medicago truncatula symbiotic genes.</title>
        <authorList>
            <person name="Pecrix Y."/>
            <person name="Staton S.E."/>
            <person name="Sallet E."/>
            <person name="Lelandais-Briere C."/>
            <person name="Moreau S."/>
            <person name="Carrere S."/>
            <person name="Blein T."/>
            <person name="Jardinaud M.F."/>
            <person name="Latrasse D."/>
            <person name="Zouine M."/>
            <person name="Zahm M."/>
            <person name="Kreplak J."/>
            <person name="Mayjonade B."/>
            <person name="Satge C."/>
            <person name="Perez M."/>
            <person name="Cauet S."/>
            <person name="Marande W."/>
            <person name="Chantry-Darmon C."/>
            <person name="Lopez-Roques C."/>
            <person name="Bouchez O."/>
            <person name="Berard A."/>
            <person name="Debelle F."/>
            <person name="Munos S."/>
            <person name="Bendahmane A."/>
            <person name="Berges H."/>
            <person name="Niebel A."/>
            <person name="Buitink J."/>
            <person name="Frugier F."/>
            <person name="Benhamed M."/>
            <person name="Crespi M."/>
            <person name="Gouzy J."/>
            <person name="Gamas P."/>
        </authorList>
    </citation>
    <scope>NUCLEOTIDE SEQUENCE [LARGE SCALE GENOMIC DNA]</scope>
    <source>
        <strain>cv. Jemalong A17</strain>
    </source>
</reference>
<dbReference type="EMBL" id="DQ314210">
    <property type="protein sequence ID" value="ABC47814.1"/>
    <property type="molecule type" value="mRNA"/>
</dbReference>
<dbReference type="EMBL" id="EU306659">
    <property type="protein sequence ID" value="ABY48145.1"/>
    <property type="molecule type" value="Genomic_DNA"/>
</dbReference>
<dbReference type="EMBL" id="CM001221">
    <property type="protein sequence ID" value="AES95924.1"/>
    <property type="molecule type" value="Genomic_DNA"/>
</dbReference>
<dbReference type="EMBL" id="PSQE01000005">
    <property type="protein sequence ID" value="RHN54884.1"/>
    <property type="molecule type" value="Genomic_DNA"/>
</dbReference>
<dbReference type="RefSeq" id="XP_003612966.1">
    <property type="nucleotide sequence ID" value="XM_003612918.2"/>
</dbReference>
<dbReference type="SMR" id="Q2PP75"/>
<dbReference type="STRING" id="3880.A9YWS3"/>
<dbReference type="GlyCosmos" id="Q2PP75">
    <property type="glycosylation" value="2 sites, No reported glycans"/>
</dbReference>
<dbReference type="PaxDb" id="3880-AES95924"/>
<dbReference type="EnsemblPlants" id="rna29982">
    <property type="protein sequence ID" value="RHN54884.1"/>
    <property type="gene ID" value="gene29982"/>
</dbReference>
<dbReference type="GeneID" id="11409371"/>
<dbReference type="Gramene" id="rna29982">
    <property type="protein sequence ID" value="RHN54884.1"/>
    <property type="gene ID" value="gene29982"/>
</dbReference>
<dbReference type="KEGG" id="mtr:11409371"/>
<dbReference type="eggNOG" id="ENOG502QTX3">
    <property type="taxonomic scope" value="Eukaryota"/>
</dbReference>
<dbReference type="HOGENOM" id="CLU_000288_62_2_1"/>
<dbReference type="OrthoDB" id="2014828at2759"/>
<dbReference type="Proteomes" id="UP000002051">
    <property type="component" value="Chromosome 5"/>
</dbReference>
<dbReference type="Proteomes" id="UP000265566">
    <property type="component" value="Chromosome 5"/>
</dbReference>
<dbReference type="GO" id="GO:0030246">
    <property type="term" value="F:carbohydrate binding"/>
    <property type="evidence" value="ECO:0007669"/>
    <property type="project" value="UniProtKB-KW"/>
</dbReference>
<dbReference type="GO" id="GO:0009610">
    <property type="term" value="P:response to symbiotic fungus"/>
    <property type="evidence" value="ECO:0000270"/>
    <property type="project" value="UniProtKB"/>
</dbReference>
<dbReference type="CDD" id="cd06899">
    <property type="entry name" value="lectin_legume_LecRK_Arcelin_ConA"/>
    <property type="match status" value="1"/>
</dbReference>
<dbReference type="Gene3D" id="2.60.120.200">
    <property type="match status" value="1"/>
</dbReference>
<dbReference type="InterPro" id="IPR013320">
    <property type="entry name" value="ConA-like_dom_sf"/>
</dbReference>
<dbReference type="InterPro" id="IPR016363">
    <property type="entry name" value="L-lectin"/>
</dbReference>
<dbReference type="InterPro" id="IPR000985">
    <property type="entry name" value="Lectin_LegA_CS"/>
</dbReference>
<dbReference type="InterPro" id="IPR019825">
    <property type="entry name" value="Lectin_legB_Mn/Ca_BS"/>
</dbReference>
<dbReference type="InterPro" id="IPR001220">
    <property type="entry name" value="Legume_lectin_dom"/>
</dbReference>
<dbReference type="InterPro" id="IPR050258">
    <property type="entry name" value="Leguminous_Lectin"/>
</dbReference>
<dbReference type="PANTHER" id="PTHR32401">
    <property type="entry name" value="CONCANAVALIN A-LIKE LECTIN FAMILY PROTEIN"/>
    <property type="match status" value="1"/>
</dbReference>
<dbReference type="PANTHER" id="PTHR32401:SF14">
    <property type="entry name" value="LECTIN 5"/>
    <property type="match status" value="1"/>
</dbReference>
<dbReference type="Pfam" id="PF00139">
    <property type="entry name" value="Lectin_legB"/>
    <property type="match status" value="1"/>
</dbReference>
<dbReference type="PIRSF" id="PIRSF002690">
    <property type="entry name" value="L-type_lectin_plant"/>
    <property type="match status" value="1"/>
</dbReference>
<dbReference type="SUPFAM" id="SSF49899">
    <property type="entry name" value="Concanavalin A-like lectins/glucanases"/>
    <property type="match status" value="1"/>
</dbReference>
<dbReference type="PROSITE" id="PS00308">
    <property type="entry name" value="LECTIN_LEGUME_ALPHA"/>
    <property type="match status" value="1"/>
</dbReference>
<dbReference type="PROSITE" id="PS00307">
    <property type="entry name" value="LECTIN_LEGUME_BETA"/>
    <property type="match status" value="1"/>
</dbReference>
<evidence type="ECO:0000255" key="1"/>
<evidence type="ECO:0000255" key="2">
    <source>
        <dbReference type="PROSITE-ProRule" id="PRU00498"/>
    </source>
</evidence>
<evidence type="ECO:0000269" key="3">
    <source>
    </source>
</evidence>
<evidence type="ECO:0000303" key="4">
    <source>
    </source>
</evidence>
<evidence type="ECO:0000305" key="5"/>
<evidence type="ECO:0000305" key="6">
    <source>
    </source>
</evidence>
<evidence type="ECO:0000312" key="7">
    <source>
        <dbReference type="EMBL" id="AES95924.1"/>
    </source>
</evidence>
<evidence type="ECO:0000312" key="8">
    <source>
        <dbReference type="EMBL" id="RHN54884.1"/>
    </source>
</evidence>